<proteinExistence type="evidence at transcript level"/>
<evidence type="ECO:0000250" key="1">
    <source>
        <dbReference type="UniProtKB" id="P16473"/>
    </source>
</evidence>
<evidence type="ECO:0000250" key="2">
    <source>
        <dbReference type="UniProtKB" id="P21463"/>
    </source>
</evidence>
<evidence type="ECO:0000255" key="3"/>
<evidence type="ECO:0000255" key="4">
    <source>
        <dbReference type="PROSITE-ProRule" id="PRU00521"/>
    </source>
</evidence>
<evidence type="ECO:0000256" key="5">
    <source>
        <dbReference type="SAM" id="MobiDB-lite"/>
    </source>
</evidence>
<evidence type="ECO:0000303" key="6">
    <source>
    </source>
</evidence>
<comment type="function">
    <text evidence="1 2">Receptor for the thyroid-stimulating hormone (TSH) or thyrotropin. Also acts as a receptor for the heterodimeric glycoprotein hormone (GPHA2:GPHB5) or thyrostimulin. The activity of this receptor is mediated by G proteins which activate adenylate cyclase. Plays a central role in controlling thyroid cell metabolism.</text>
</comment>
<comment type="subunit">
    <text evidence="1">Interacts with heterodimer GPHA2:GPHB5; this interaction stimulates cAMP production. Interacts (via the PDZ-binding motif) with SCRIB; regulates TSHR trafficking and function.</text>
</comment>
<comment type="subcellular location">
    <subcellularLocation>
        <location evidence="1">Cell membrane</location>
        <topology evidence="1">Multi-pass membrane protein</topology>
    </subcellularLocation>
    <subcellularLocation>
        <location evidence="1">Basolateral cell membrane</location>
        <topology evidence="1">Multi-pass membrane protein</topology>
    </subcellularLocation>
</comment>
<comment type="alternative products">
    <event type="alternative splicing"/>
    <isoform>
        <id>Q27987-1</id>
        <name>1</name>
        <sequence type="displayed"/>
    </isoform>
    <isoform>
        <id>Q27987-2</id>
        <name>2</name>
        <sequence type="described" ref="VSP_018130"/>
    </isoform>
</comment>
<comment type="PTM">
    <text evidence="1">Glycosylated.</text>
</comment>
<comment type="PTM">
    <text evidence="1">Sulfated. Sulfation on Tyr-384 plays a role in thyrotropin receptor binding and activation.</text>
</comment>
<comment type="similarity">
    <text evidence="4">Belongs to the G-protein coupled receptor 1 family. FSH/LSH/TSH subfamily.</text>
</comment>
<organism>
    <name type="scientific">Bos taurus</name>
    <name type="common">Bovine</name>
    <dbReference type="NCBI Taxonomy" id="9913"/>
    <lineage>
        <taxon>Eukaryota</taxon>
        <taxon>Metazoa</taxon>
        <taxon>Chordata</taxon>
        <taxon>Craniata</taxon>
        <taxon>Vertebrata</taxon>
        <taxon>Euteleostomi</taxon>
        <taxon>Mammalia</taxon>
        <taxon>Eutheria</taxon>
        <taxon>Laurasiatheria</taxon>
        <taxon>Artiodactyla</taxon>
        <taxon>Ruminantia</taxon>
        <taxon>Pecora</taxon>
        <taxon>Bovidae</taxon>
        <taxon>Bovinae</taxon>
        <taxon>Bos</taxon>
    </lineage>
</organism>
<reference key="1">
    <citation type="journal article" date="1997" name="J. Mol. Endocrinol.">
        <title>Bovine thyrotropin receptor cDNA is characterized by full-length and truncated transcripts.</title>
        <authorList>
            <person name="Silversides D.W."/>
            <person name="Houde A."/>
            <person name="Ethier J.-F."/>
            <person name="Lussier J.G."/>
        </authorList>
    </citation>
    <scope>NUCLEOTIDE SEQUENCE [MRNA] (ISOFORMS 1 AND 2)</scope>
    <source>
        <tissue>Thyroid</tissue>
    </source>
</reference>
<dbReference type="EMBL" id="U15570">
    <property type="protein sequence ID" value="AAC18639.1"/>
    <property type="molecule type" value="mRNA"/>
</dbReference>
<dbReference type="EMBL" id="U15568">
    <property type="protein sequence ID" value="AAC18638.1"/>
    <property type="molecule type" value="mRNA"/>
</dbReference>
<dbReference type="RefSeq" id="NP_776631.1">
    <molecule id="Q27987-1"/>
    <property type="nucleotide sequence ID" value="NM_174206.3"/>
</dbReference>
<dbReference type="SMR" id="Q27987"/>
<dbReference type="FunCoup" id="Q27987">
    <property type="interactions" value="313"/>
</dbReference>
<dbReference type="STRING" id="9913.ENSBTAP00000052860"/>
<dbReference type="GlyCosmos" id="Q27987">
    <property type="glycosylation" value="5 sites, No reported glycans"/>
</dbReference>
<dbReference type="GlyGen" id="Q27987">
    <property type="glycosylation" value="5 sites"/>
</dbReference>
<dbReference type="PaxDb" id="9913-ENSBTAP00000052860"/>
<dbReference type="GeneID" id="281553"/>
<dbReference type="KEGG" id="bta:281553"/>
<dbReference type="CTD" id="7253"/>
<dbReference type="eggNOG" id="KOG2087">
    <property type="taxonomic scope" value="Eukaryota"/>
</dbReference>
<dbReference type="InParanoid" id="Q27987"/>
<dbReference type="OrthoDB" id="5981530at2759"/>
<dbReference type="Proteomes" id="UP000009136">
    <property type="component" value="Unplaced"/>
</dbReference>
<dbReference type="GO" id="GO:0016323">
    <property type="term" value="C:basolateral plasma membrane"/>
    <property type="evidence" value="ECO:0000250"/>
    <property type="project" value="UniProtKB"/>
</dbReference>
<dbReference type="GO" id="GO:0005886">
    <property type="term" value="C:plasma membrane"/>
    <property type="evidence" value="ECO:0000250"/>
    <property type="project" value="UniProtKB"/>
</dbReference>
<dbReference type="GO" id="GO:0008528">
    <property type="term" value="F:G protein-coupled peptide receptor activity"/>
    <property type="evidence" value="ECO:0000318"/>
    <property type="project" value="GO_Central"/>
</dbReference>
<dbReference type="GO" id="GO:0044877">
    <property type="term" value="F:protein-containing complex binding"/>
    <property type="evidence" value="ECO:0000250"/>
    <property type="project" value="UniProtKB"/>
</dbReference>
<dbReference type="GO" id="GO:0038023">
    <property type="term" value="F:signaling receptor activity"/>
    <property type="evidence" value="ECO:0000250"/>
    <property type="project" value="UniProtKB"/>
</dbReference>
<dbReference type="GO" id="GO:0004996">
    <property type="term" value="F:thyroid-stimulating hormone receptor activity"/>
    <property type="evidence" value="ECO:0000250"/>
    <property type="project" value="UniProtKB"/>
</dbReference>
<dbReference type="GO" id="GO:0007189">
    <property type="term" value="P:adenylate cyclase-activating G protein-coupled receptor signaling pathway"/>
    <property type="evidence" value="ECO:0000250"/>
    <property type="project" value="UniProtKB"/>
</dbReference>
<dbReference type="GO" id="GO:0007166">
    <property type="term" value="P:cell surface receptor signaling pathway"/>
    <property type="evidence" value="ECO:0000250"/>
    <property type="project" value="UniProtKB"/>
</dbReference>
<dbReference type="GO" id="GO:1904588">
    <property type="term" value="P:cellular response to glycoprotein"/>
    <property type="evidence" value="ECO:0000250"/>
    <property type="project" value="UniProtKB"/>
</dbReference>
<dbReference type="GO" id="GO:1905229">
    <property type="term" value="P:cellular response to thyrotropin-releasing hormone"/>
    <property type="evidence" value="ECO:0000250"/>
    <property type="project" value="UniProtKB"/>
</dbReference>
<dbReference type="GO" id="GO:0009755">
    <property type="term" value="P:hormone-mediated signaling pathway"/>
    <property type="evidence" value="ECO:0000318"/>
    <property type="project" value="GO_Central"/>
</dbReference>
<dbReference type="GO" id="GO:0038194">
    <property type="term" value="P:thyroid-stimulating hormone signaling pathway"/>
    <property type="evidence" value="ECO:0000250"/>
    <property type="project" value="UniProtKB"/>
</dbReference>
<dbReference type="CDD" id="cd15964">
    <property type="entry name" value="7tmA_TSH-R"/>
    <property type="match status" value="1"/>
</dbReference>
<dbReference type="FunFam" id="1.20.1070.10:FF:000019">
    <property type="entry name" value="Lutropin-choriogonadotropic hormone receptor"/>
    <property type="match status" value="1"/>
</dbReference>
<dbReference type="FunFam" id="3.80.10.10:FF:000176">
    <property type="entry name" value="Thyrotropin receptor"/>
    <property type="match status" value="1"/>
</dbReference>
<dbReference type="Gene3D" id="1.20.1070.10">
    <property type="entry name" value="Rhodopsin 7-helix transmembrane proteins"/>
    <property type="match status" value="1"/>
</dbReference>
<dbReference type="Gene3D" id="3.80.10.10">
    <property type="entry name" value="Ribonuclease Inhibitor"/>
    <property type="match status" value="1"/>
</dbReference>
<dbReference type="InterPro" id="IPR000276">
    <property type="entry name" value="GPCR_Rhodpsn"/>
</dbReference>
<dbReference type="InterPro" id="IPR017452">
    <property type="entry name" value="GPCR_Rhodpsn_7TM"/>
</dbReference>
<dbReference type="InterPro" id="IPR002131">
    <property type="entry name" value="Gphrmn_rcpt_fam"/>
</dbReference>
<dbReference type="InterPro" id="IPR026906">
    <property type="entry name" value="LRR_5"/>
</dbReference>
<dbReference type="InterPro" id="IPR032675">
    <property type="entry name" value="LRR_dom_sf"/>
</dbReference>
<dbReference type="InterPro" id="IPR002274">
    <property type="entry name" value="TSH_rcpt"/>
</dbReference>
<dbReference type="PANTHER" id="PTHR24372">
    <property type="entry name" value="GLYCOPROTEIN HORMONE RECEPTOR"/>
    <property type="match status" value="1"/>
</dbReference>
<dbReference type="PANTHER" id="PTHR24372:SF0">
    <property type="entry name" value="THYROTROPIN RECEPTOR"/>
    <property type="match status" value="1"/>
</dbReference>
<dbReference type="Pfam" id="PF00001">
    <property type="entry name" value="7tm_1"/>
    <property type="match status" value="1"/>
</dbReference>
<dbReference type="Pfam" id="PF13306">
    <property type="entry name" value="LRR_5"/>
    <property type="match status" value="2"/>
</dbReference>
<dbReference type="PRINTS" id="PR00373">
    <property type="entry name" value="GLYCHORMONER"/>
</dbReference>
<dbReference type="PRINTS" id="PR00237">
    <property type="entry name" value="GPCRRHODOPSN"/>
</dbReference>
<dbReference type="PRINTS" id="PR01145">
    <property type="entry name" value="TSHRECEPTOR"/>
</dbReference>
<dbReference type="SUPFAM" id="SSF81321">
    <property type="entry name" value="Family A G protein-coupled receptor-like"/>
    <property type="match status" value="1"/>
</dbReference>
<dbReference type="SUPFAM" id="SSF52058">
    <property type="entry name" value="L domain-like"/>
    <property type="match status" value="1"/>
</dbReference>
<dbReference type="PROSITE" id="PS00237">
    <property type="entry name" value="G_PROTEIN_RECEP_F1_1"/>
    <property type="match status" value="1"/>
</dbReference>
<dbReference type="PROSITE" id="PS50262">
    <property type="entry name" value="G_PROTEIN_RECEP_F1_2"/>
    <property type="match status" value="1"/>
</dbReference>
<name>TSHR_BOVIN</name>
<keyword id="KW-0025">Alternative splicing</keyword>
<keyword id="KW-1003">Cell membrane</keyword>
<keyword id="KW-1015">Disulfide bond</keyword>
<keyword id="KW-0297">G-protein coupled receptor</keyword>
<keyword id="KW-0325">Glycoprotein</keyword>
<keyword id="KW-0433">Leucine-rich repeat</keyword>
<keyword id="KW-0472">Membrane</keyword>
<keyword id="KW-0675">Receptor</keyword>
<keyword id="KW-1185">Reference proteome</keyword>
<keyword id="KW-0677">Repeat</keyword>
<keyword id="KW-0732">Signal</keyword>
<keyword id="KW-0765">Sulfation</keyword>
<keyword id="KW-0807">Transducer</keyword>
<keyword id="KW-0812">Transmembrane</keyword>
<keyword id="KW-1133">Transmembrane helix</keyword>
<sequence>MRPTPLLRLALFLVLPSSLGGERCPSPPCECRQEDDFRVTCKDIQSIPSLPPSTQTLKFIETHLKTIPSRAFSNLPNISRIYLSIDATLQQLESHSFYNLSKVTHIEIRNTRSLTYIDSGALKELPLLKFLGIFNTGLRVFPDLTKIYSTDVFFILEITDNPYMTSIPANAFQGLCNETLTLKLYNNGFTSIQGHAFNGTKLDAVYLNKNKYLTVIGQDAFAGVYSGPTLLDISYTSVTALPSKGLEHLKELIARNTWTLRKLPLSLSFLHLTRADLSYPSHCCAFKNQKKIRGILQSLMCNESSIRGLRQRKSASALNGPFYQEYEDLGDGSAGYKENSKFQDTQSNSHYYVFFEEQEDEIIGFGQQLKNPQEETLQAFDSHYDYTVCGGSEDMVCTPKSDEFNPCEDIMGYKFLRIVVWFVSLLALLGNVFVLVILLTSHYKLTVPRFLMCNLAFADFCMGLYLLLIASVDLYTQSEYYNHAIDWQTGPGCNTAGFFTVFASELSVYTLTVITLERWHAITFAMRLDRKIRLWHAYVIMLGGWVCCFLLALLPLVGISSYAKVSICLPMDTETPLALAYIILVLLLNIIAFIIVCACYVKIYITVRNPHYNPGDKDTRIAKRMAVLIFTDFMCMAPISFYALSALMNKPLITVTNSKILLVLFYPLNSCANPFLYAIFTKAFQRDVFMLLSKFGICKRQAQAYRGQRVSPKNSTGIRVQKVPPDVRQSLPNVQDDYELLENSHLTPKQQDQTSKEYKRTVL</sequence>
<feature type="signal peptide" evidence="3">
    <location>
        <begin position="1"/>
        <end position="21"/>
    </location>
</feature>
<feature type="chain" id="PRO_0000012784" description="Thyrotropin receptor">
    <location>
        <begin position="22"/>
        <end position="763"/>
    </location>
</feature>
<feature type="topological domain" description="Extracellular" evidence="3">
    <location>
        <begin position="22"/>
        <end position="412"/>
    </location>
</feature>
<feature type="transmembrane region" description="Helical; Name=1" evidence="3">
    <location>
        <begin position="413"/>
        <end position="440"/>
    </location>
</feature>
<feature type="topological domain" description="Cytoplasmic" evidence="3">
    <location>
        <begin position="441"/>
        <end position="449"/>
    </location>
</feature>
<feature type="transmembrane region" description="Helical; Name=2" evidence="3">
    <location>
        <begin position="450"/>
        <end position="472"/>
    </location>
</feature>
<feature type="topological domain" description="Extracellular" evidence="3">
    <location>
        <begin position="473"/>
        <end position="493"/>
    </location>
</feature>
<feature type="transmembrane region" description="Helical; Name=3" evidence="3">
    <location>
        <begin position="494"/>
        <end position="516"/>
    </location>
</feature>
<feature type="topological domain" description="Cytoplasmic" evidence="3">
    <location>
        <begin position="517"/>
        <end position="536"/>
    </location>
</feature>
<feature type="transmembrane region" description="Helical; Name=4" evidence="3">
    <location>
        <begin position="537"/>
        <end position="559"/>
    </location>
</feature>
<feature type="topological domain" description="Extracellular" evidence="3">
    <location>
        <begin position="560"/>
        <end position="579"/>
    </location>
</feature>
<feature type="transmembrane region" description="Helical; Name=5" evidence="3">
    <location>
        <begin position="580"/>
        <end position="601"/>
    </location>
</feature>
<feature type="topological domain" description="Cytoplasmic" evidence="3">
    <location>
        <begin position="602"/>
        <end position="624"/>
    </location>
</feature>
<feature type="transmembrane region" description="Helical; Name=6" evidence="3">
    <location>
        <begin position="625"/>
        <end position="648"/>
    </location>
</feature>
<feature type="topological domain" description="Extracellular" evidence="3">
    <location>
        <begin position="649"/>
        <end position="659"/>
    </location>
</feature>
<feature type="transmembrane region" description="Helical; Name=7" evidence="3">
    <location>
        <begin position="660"/>
        <end position="681"/>
    </location>
</feature>
<feature type="topological domain" description="Cytoplasmic" evidence="3">
    <location>
        <begin position="682"/>
        <end position="763"/>
    </location>
</feature>
<feature type="repeat" description="LRR 1">
    <location>
        <begin position="51"/>
        <end position="74"/>
    </location>
</feature>
<feature type="repeat" description="LRR 2">
    <location>
        <begin position="125"/>
        <end position="150"/>
    </location>
</feature>
<feature type="repeat" description="LRR 3">
    <location>
        <begin position="151"/>
        <end position="174"/>
    </location>
</feature>
<feature type="repeat" description="LRR 4">
    <location>
        <begin position="176"/>
        <end position="199"/>
    </location>
</feature>
<feature type="repeat" description="LRR 5">
    <location>
        <begin position="201"/>
        <end position="223"/>
    </location>
</feature>
<feature type="repeat" description="LRR 6">
    <location>
        <begin position="225"/>
        <end position="248"/>
    </location>
</feature>
<feature type="region of interest" description="Disordered" evidence="5">
    <location>
        <begin position="742"/>
        <end position="763"/>
    </location>
</feature>
<feature type="short sequence motif" description="PDZ-binding">
    <location>
        <begin position="761"/>
        <end position="763"/>
    </location>
</feature>
<feature type="compositionally biased region" description="Polar residues" evidence="5">
    <location>
        <begin position="744"/>
        <end position="753"/>
    </location>
</feature>
<feature type="compositionally biased region" description="Basic and acidic residues" evidence="5">
    <location>
        <begin position="754"/>
        <end position="763"/>
    </location>
</feature>
<feature type="modified residue" description="Sulfotyrosine" evidence="1">
    <location>
        <position position="384"/>
    </location>
</feature>
<feature type="glycosylation site" description="N-linked (GlcNAc...) asparagine" evidence="3">
    <location>
        <position position="77"/>
    </location>
</feature>
<feature type="glycosylation site" description="N-linked (GlcNAc...) asparagine" evidence="3">
    <location>
        <position position="99"/>
    </location>
</feature>
<feature type="glycosylation site" description="N-linked (GlcNAc...) asparagine" evidence="3">
    <location>
        <position position="177"/>
    </location>
</feature>
<feature type="glycosylation site" description="N-linked (GlcNAc...) asparagine" evidence="3">
    <location>
        <position position="198"/>
    </location>
</feature>
<feature type="glycosylation site" description="N-linked (GlcNAc...) asparagine" evidence="3">
    <location>
        <position position="302"/>
    </location>
</feature>
<feature type="disulfide bond" evidence="4">
    <location>
        <begin position="31"/>
        <end position="41"/>
    </location>
</feature>
<feature type="disulfide bond" evidence="4">
    <location>
        <begin position="493"/>
        <end position="568"/>
    </location>
</feature>
<feature type="splice variant" id="VSP_018130" description="In isoform 2." evidence="6">
    <location>
        <begin position="591"/>
        <end position="763"/>
    </location>
</feature>
<protein>
    <recommendedName>
        <fullName>Thyrotropin receptor</fullName>
    </recommendedName>
    <alternativeName>
        <fullName>Thyroid-stimulating hormone receptor</fullName>
        <shortName>TSH-R</shortName>
    </alternativeName>
</protein>
<accession>Q27987</accession>
<accession>Q27986</accession>
<gene>
    <name type="primary">TSHR</name>
</gene>